<keyword id="KW-0021">Allosteric enzyme</keyword>
<keyword id="KW-0328">Glycosyltransferase</keyword>
<keyword id="KW-0342">GTP-binding</keyword>
<keyword id="KW-0460">Magnesium</keyword>
<keyword id="KW-0547">Nucleotide-binding</keyword>
<keyword id="KW-0808">Transferase</keyword>
<sequence>MIKDERWEGVYSFEDSPYLMETLTDLRKISTENISFRKGLVRLGRYMGYELTKTMEFEKMPIQTPLEKTEGVFAKDRKNVVIITILRAAFPLMEGLIKNFESAKVGIVSASRGHAPDFKIEMNYIKVPQLNPEDTVIVSDPMIATGSTLIHVLKEFRDSKPKRMMIVGVLAAPEGINAVKKEFSDVEIFVTKIDENLNKDGYIVPGLGDAGDRAFGEPFKVPMLPQMHNLE</sequence>
<reference key="1">
    <citation type="submission" date="2007-03" db="EMBL/GenBank/DDBJ databases">
        <title>Complete sequence of chromosome of Methanococcus maripaludis C5.</title>
        <authorList>
            <consortium name="US DOE Joint Genome Institute"/>
            <person name="Copeland A."/>
            <person name="Lucas S."/>
            <person name="Lapidus A."/>
            <person name="Barry K."/>
            <person name="Glavina del Rio T."/>
            <person name="Dalin E."/>
            <person name="Tice H."/>
            <person name="Pitluck S."/>
            <person name="Chertkov O."/>
            <person name="Brettin T."/>
            <person name="Bruce D."/>
            <person name="Han C."/>
            <person name="Detter J.C."/>
            <person name="Schmutz J."/>
            <person name="Larimer F."/>
            <person name="Land M."/>
            <person name="Hauser L."/>
            <person name="Kyrpides N."/>
            <person name="Mikhailova N."/>
            <person name="Sieprawska-Lupa M."/>
            <person name="Whitman W.B."/>
            <person name="Richardson P."/>
        </authorList>
    </citation>
    <scope>NUCLEOTIDE SEQUENCE [LARGE SCALE GENOMIC DNA]</scope>
    <source>
        <strain>C5 / ATCC BAA-1333</strain>
    </source>
</reference>
<comment type="function">
    <text evidence="1">Catalyzes the conversion of uracil and 5-phospho-alpha-D-ribose 1-diphosphate (PRPP) to UMP and diphosphate.</text>
</comment>
<comment type="catalytic activity">
    <reaction evidence="1">
        <text>UMP + diphosphate = 5-phospho-alpha-D-ribose 1-diphosphate + uracil</text>
        <dbReference type="Rhea" id="RHEA:13017"/>
        <dbReference type="ChEBI" id="CHEBI:17568"/>
        <dbReference type="ChEBI" id="CHEBI:33019"/>
        <dbReference type="ChEBI" id="CHEBI:57865"/>
        <dbReference type="ChEBI" id="CHEBI:58017"/>
        <dbReference type="EC" id="2.4.2.9"/>
    </reaction>
</comment>
<comment type="cofactor">
    <cofactor evidence="1">
        <name>Mg(2+)</name>
        <dbReference type="ChEBI" id="CHEBI:18420"/>
    </cofactor>
    <text evidence="1">Binds 1 Mg(2+) ion per subunit. The magnesium is bound as Mg-PRPP.</text>
</comment>
<comment type="activity regulation">
    <text evidence="1">Allosterically activated by GTP.</text>
</comment>
<comment type="pathway">
    <text evidence="1">Pyrimidine metabolism; UMP biosynthesis via salvage pathway; UMP from uracil: step 1/1.</text>
</comment>
<comment type="similarity">
    <text evidence="1">Belongs to the UPRTase family.</text>
</comment>
<organism>
    <name type="scientific">Methanococcus maripaludis (strain C5 / ATCC BAA-1333)</name>
    <dbReference type="NCBI Taxonomy" id="402880"/>
    <lineage>
        <taxon>Archaea</taxon>
        <taxon>Methanobacteriati</taxon>
        <taxon>Methanobacteriota</taxon>
        <taxon>Methanomada group</taxon>
        <taxon>Methanococci</taxon>
        <taxon>Methanococcales</taxon>
        <taxon>Methanococcaceae</taxon>
        <taxon>Methanococcus</taxon>
    </lineage>
</organism>
<accession>A4FYB9</accession>
<evidence type="ECO:0000255" key="1">
    <source>
        <dbReference type="HAMAP-Rule" id="MF_01218"/>
    </source>
</evidence>
<feature type="chain" id="PRO_1000053739" description="Uracil phosphoribosyltransferase">
    <location>
        <begin position="1"/>
        <end position="231"/>
    </location>
</feature>
<feature type="binding site" evidence="1">
    <location>
        <begin position="38"/>
        <end position="42"/>
    </location>
    <ligand>
        <name>GTP</name>
        <dbReference type="ChEBI" id="CHEBI:37565"/>
    </ligand>
</feature>
<feature type="binding site" evidence="1">
    <location>
        <position position="87"/>
    </location>
    <ligand>
        <name>5-phospho-alpha-D-ribose 1-diphosphate</name>
        <dbReference type="ChEBI" id="CHEBI:58017"/>
    </ligand>
</feature>
<feature type="binding site" evidence="1">
    <location>
        <position position="112"/>
    </location>
    <ligand>
        <name>5-phospho-alpha-D-ribose 1-diphosphate</name>
        <dbReference type="ChEBI" id="CHEBI:58017"/>
    </ligand>
</feature>
<feature type="binding site" evidence="1">
    <location>
        <begin position="140"/>
        <end position="148"/>
    </location>
    <ligand>
        <name>5-phospho-alpha-D-ribose 1-diphosphate</name>
        <dbReference type="ChEBI" id="CHEBI:58017"/>
    </ligand>
</feature>
<feature type="binding site" evidence="1">
    <location>
        <position position="203"/>
    </location>
    <ligand>
        <name>uracil</name>
        <dbReference type="ChEBI" id="CHEBI:17568"/>
    </ligand>
</feature>
<feature type="binding site" evidence="1">
    <location>
        <begin position="208"/>
        <end position="210"/>
    </location>
    <ligand>
        <name>uracil</name>
        <dbReference type="ChEBI" id="CHEBI:17568"/>
    </ligand>
</feature>
<feature type="binding site" evidence="1">
    <location>
        <position position="209"/>
    </location>
    <ligand>
        <name>5-phospho-alpha-D-ribose 1-diphosphate</name>
        <dbReference type="ChEBI" id="CHEBI:58017"/>
    </ligand>
</feature>
<dbReference type="EC" id="2.4.2.9" evidence="1"/>
<dbReference type="EMBL" id="CP000609">
    <property type="protein sequence ID" value="ABO35203.1"/>
    <property type="molecule type" value="Genomic_DNA"/>
</dbReference>
<dbReference type="RefSeq" id="WP_011868657.1">
    <property type="nucleotide sequence ID" value="NC_009135.1"/>
</dbReference>
<dbReference type="SMR" id="A4FYB9"/>
<dbReference type="STRING" id="402880.MmarC5_0896"/>
<dbReference type="GeneID" id="4927527"/>
<dbReference type="KEGG" id="mmq:MmarC5_0896"/>
<dbReference type="eggNOG" id="arCOG04128">
    <property type="taxonomic scope" value="Archaea"/>
</dbReference>
<dbReference type="HOGENOM" id="CLU_067096_2_0_2"/>
<dbReference type="OrthoDB" id="80352at2157"/>
<dbReference type="UniPathway" id="UPA00574">
    <property type="reaction ID" value="UER00636"/>
</dbReference>
<dbReference type="Proteomes" id="UP000000253">
    <property type="component" value="Chromosome"/>
</dbReference>
<dbReference type="GO" id="GO:0005525">
    <property type="term" value="F:GTP binding"/>
    <property type="evidence" value="ECO:0007669"/>
    <property type="project" value="UniProtKB-KW"/>
</dbReference>
<dbReference type="GO" id="GO:0000287">
    <property type="term" value="F:magnesium ion binding"/>
    <property type="evidence" value="ECO:0007669"/>
    <property type="project" value="UniProtKB-UniRule"/>
</dbReference>
<dbReference type="GO" id="GO:0004845">
    <property type="term" value="F:uracil phosphoribosyltransferase activity"/>
    <property type="evidence" value="ECO:0007669"/>
    <property type="project" value="UniProtKB-UniRule"/>
</dbReference>
<dbReference type="GO" id="GO:0044206">
    <property type="term" value="P:UMP salvage"/>
    <property type="evidence" value="ECO:0007669"/>
    <property type="project" value="UniProtKB-UniRule"/>
</dbReference>
<dbReference type="GO" id="GO:0006223">
    <property type="term" value="P:uracil salvage"/>
    <property type="evidence" value="ECO:0007669"/>
    <property type="project" value="InterPro"/>
</dbReference>
<dbReference type="CDD" id="cd06223">
    <property type="entry name" value="PRTases_typeI"/>
    <property type="match status" value="1"/>
</dbReference>
<dbReference type="Gene3D" id="3.40.50.2020">
    <property type="match status" value="1"/>
</dbReference>
<dbReference type="HAMAP" id="MF_01218_A">
    <property type="entry name" value="Upp_A"/>
    <property type="match status" value="1"/>
</dbReference>
<dbReference type="InterPro" id="IPR000836">
    <property type="entry name" value="PRibTrfase_dom"/>
</dbReference>
<dbReference type="InterPro" id="IPR029057">
    <property type="entry name" value="PRTase-like"/>
</dbReference>
<dbReference type="InterPro" id="IPR034331">
    <property type="entry name" value="Upp_A"/>
</dbReference>
<dbReference type="InterPro" id="IPR005765">
    <property type="entry name" value="Ura_phspho_trans"/>
</dbReference>
<dbReference type="NCBIfam" id="NF001097">
    <property type="entry name" value="PRK00129.1"/>
    <property type="match status" value="1"/>
</dbReference>
<dbReference type="NCBIfam" id="TIGR01091">
    <property type="entry name" value="upp"/>
    <property type="match status" value="1"/>
</dbReference>
<dbReference type="Pfam" id="PF14681">
    <property type="entry name" value="UPRTase"/>
    <property type="match status" value="1"/>
</dbReference>
<dbReference type="SUPFAM" id="SSF53271">
    <property type="entry name" value="PRTase-like"/>
    <property type="match status" value="1"/>
</dbReference>
<protein>
    <recommendedName>
        <fullName evidence="1">Uracil phosphoribosyltransferase</fullName>
        <ecNumber evidence="1">2.4.2.9</ecNumber>
    </recommendedName>
    <alternativeName>
        <fullName evidence="1">UMP pyrophosphorylase</fullName>
    </alternativeName>
    <alternativeName>
        <fullName evidence="1">UPRTase</fullName>
    </alternativeName>
</protein>
<name>UPP_METM5</name>
<gene>
    <name evidence="1" type="primary">upp</name>
    <name type="ordered locus">MmarC5_0896</name>
</gene>
<proteinExistence type="inferred from homology"/>